<proteinExistence type="inferred from homology"/>
<accession>Q1I3R6</accession>
<protein>
    <recommendedName>
        <fullName evidence="1">Glucans biosynthesis glucosyltransferase H</fullName>
        <ecNumber evidence="1">2.4.1.-</ecNumber>
    </recommendedName>
</protein>
<reference key="1">
    <citation type="journal article" date="2006" name="Nat. Biotechnol.">
        <title>Complete genome sequence of the entomopathogenic and metabolically versatile soil bacterium Pseudomonas entomophila.</title>
        <authorList>
            <person name="Vodovar N."/>
            <person name="Vallenet D."/>
            <person name="Cruveiller S."/>
            <person name="Rouy Z."/>
            <person name="Barbe V."/>
            <person name="Acosta C."/>
            <person name="Cattolico L."/>
            <person name="Jubin C."/>
            <person name="Lajus A."/>
            <person name="Segurens B."/>
            <person name="Vacherie B."/>
            <person name="Wincker P."/>
            <person name="Weissenbach J."/>
            <person name="Lemaitre B."/>
            <person name="Medigue C."/>
            <person name="Boccard F."/>
        </authorList>
    </citation>
    <scope>NUCLEOTIDE SEQUENCE [LARGE SCALE GENOMIC DNA]</scope>
    <source>
        <strain>L48</strain>
    </source>
</reference>
<evidence type="ECO:0000255" key="1">
    <source>
        <dbReference type="HAMAP-Rule" id="MF_01072"/>
    </source>
</evidence>
<sequence length="855" mass="95847">MSNSSARPESLSEYLAHLPLSDEQRAELARCTSFSELHQHLAAQPAASTTEAAQASVGPRLTVGSAAELEEAEMLGVDASGRLCLKIAPPIKRTKVVPEPWRTNVLIRMWRRMTGRTNAPQPPKRELPPARWRTVGSIRRYILLTLMIGQTLVAGWYMKGILPYQGWSFVDFDEIVHQPLWDTVVQVWPYALQTSILVLFGILFCWVSAGFWTALMGFLELLTGRDKYKISGSSAGNEPIAPEARTALVMPICNEDVPRVFAGLRATFESVAASGNLDRFDFFVLSDTNDTDIAVAEQQAWLDVCREAKGFGRIFYRRRRRRVKRKSGNLDDFCRRWGGEYKYMVVLDADSVMSGECLSSLVRLMEANPDAGIIQTGPKASGMDTLYARLQQFATRVYGPLFTAGLHFWQLGESHYWGHNAIIRMKPFIEHCALAPLPGKGAFAGAILSHDFVEAALMRRAGWGVWIAYDLPGSYEELPPNLLDELKRDRRWCHGNLMNFRLFLVKGMHPVHRAVFLTGVMSYLSAPLWFLFLVLSTALLATNTLMEPQYFIEPFQLYPLWPQWHPEKAIALFSTTIVLLFLPKLLSVILIWAKGATEFGGRVKVTLSMLLEMLFSMLLAPVRMIFHTRFVLAAFLGWAATWNSPQRDDDSTPWSEAVRRHGPQTLLGIAWASLVAWLNPSFLWWLAPIVGSLVLSIPVSVISSRVRLGLAARDEKLFLIPEEYATPPELLATDQYTHENRWHALHDGFVRAVVDPRQNALACAMATARHGQAAPIEALRAERVAKALEVGPKGLDGNTRLALLSDPVALSRLHEQVWAEHNTAWIDVWRASIDNDPHSPLLPLHPENVAQPALA</sequence>
<dbReference type="EC" id="2.4.1.-" evidence="1"/>
<dbReference type="EMBL" id="CT573326">
    <property type="protein sequence ID" value="CAK17720.1"/>
    <property type="molecule type" value="Genomic_DNA"/>
</dbReference>
<dbReference type="RefSeq" id="WP_011536080.1">
    <property type="nucleotide sequence ID" value="NC_008027.1"/>
</dbReference>
<dbReference type="STRING" id="384676.PSEEN5089"/>
<dbReference type="CAZy" id="GT2">
    <property type="family name" value="Glycosyltransferase Family 2"/>
</dbReference>
<dbReference type="GeneID" id="32808025"/>
<dbReference type="KEGG" id="pen:PSEEN5089"/>
<dbReference type="eggNOG" id="COG2943">
    <property type="taxonomic scope" value="Bacteria"/>
</dbReference>
<dbReference type="HOGENOM" id="CLU_015730_0_0_6"/>
<dbReference type="OrthoDB" id="9775281at2"/>
<dbReference type="UniPathway" id="UPA00637"/>
<dbReference type="Proteomes" id="UP000000658">
    <property type="component" value="Chromosome"/>
</dbReference>
<dbReference type="GO" id="GO:0005886">
    <property type="term" value="C:plasma membrane"/>
    <property type="evidence" value="ECO:0007669"/>
    <property type="project" value="UniProtKB-SubCell"/>
</dbReference>
<dbReference type="GO" id="GO:0016758">
    <property type="term" value="F:hexosyltransferase activity"/>
    <property type="evidence" value="ECO:0007669"/>
    <property type="project" value="UniProtKB-UniRule"/>
</dbReference>
<dbReference type="GO" id="GO:0009250">
    <property type="term" value="P:glucan biosynthetic process"/>
    <property type="evidence" value="ECO:0007669"/>
    <property type="project" value="UniProtKB-UniRule"/>
</dbReference>
<dbReference type="CDD" id="cd04191">
    <property type="entry name" value="Glucan_BSP_MdoH"/>
    <property type="match status" value="1"/>
</dbReference>
<dbReference type="FunFam" id="3.90.550.10:FF:000047">
    <property type="entry name" value="Glucans biosynthesis glucosyltransferase H"/>
    <property type="match status" value="1"/>
</dbReference>
<dbReference type="Gene3D" id="3.90.550.10">
    <property type="entry name" value="Spore Coat Polysaccharide Biosynthesis Protein SpsA, Chain A"/>
    <property type="match status" value="1"/>
</dbReference>
<dbReference type="HAMAP" id="MF_01072">
    <property type="entry name" value="MdoH_OpgH"/>
    <property type="match status" value="1"/>
</dbReference>
<dbReference type="InterPro" id="IPR023725">
    <property type="entry name" value="Glucans_biosynth_gluTrFase_H"/>
</dbReference>
<dbReference type="InterPro" id="IPR001173">
    <property type="entry name" value="Glyco_trans_2-like"/>
</dbReference>
<dbReference type="InterPro" id="IPR050321">
    <property type="entry name" value="Glycosyltr_2/OpgH_subfam"/>
</dbReference>
<dbReference type="InterPro" id="IPR029044">
    <property type="entry name" value="Nucleotide-diphossugar_trans"/>
</dbReference>
<dbReference type="NCBIfam" id="NF003955">
    <property type="entry name" value="PRK05454.1-1"/>
    <property type="match status" value="1"/>
</dbReference>
<dbReference type="NCBIfam" id="NF003958">
    <property type="entry name" value="PRK05454.2-1"/>
    <property type="match status" value="1"/>
</dbReference>
<dbReference type="NCBIfam" id="NF003962">
    <property type="entry name" value="PRK05454.2-5"/>
    <property type="match status" value="1"/>
</dbReference>
<dbReference type="PANTHER" id="PTHR43867">
    <property type="entry name" value="CELLULOSE SYNTHASE CATALYTIC SUBUNIT A [UDP-FORMING]"/>
    <property type="match status" value="1"/>
</dbReference>
<dbReference type="PANTHER" id="PTHR43867:SF5">
    <property type="entry name" value="GLUCANS BIOSYNTHESIS GLUCOSYLTRANSFERASE H"/>
    <property type="match status" value="1"/>
</dbReference>
<dbReference type="Pfam" id="PF00535">
    <property type="entry name" value="Glycos_transf_2"/>
    <property type="match status" value="1"/>
</dbReference>
<dbReference type="SUPFAM" id="SSF53448">
    <property type="entry name" value="Nucleotide-diphospho-sugar transferases"/>
    <property type="match status" value="1"/>
</dbReference>
<feature type="chain" id="PRO_1000064609" description="Glucans biosynthesis glucosyltransferase H">
    <location>
        <begin position="1"/>
        <end position="855"/>
    </location>
</feature>
<feature type="transmembrane region" description="Helical" evidence="1">
    <location>
        <begin position="142"/>
        <end position="162"/>
    </location>
</feature>
<feature type="transmembrane region" description="Helical" evidence="1">
    <location>
        <begin position="196"/>
        <end position="216"/>
    </location>
</feature>
<feature type="transmembrane region" description="Helical" evidence="1">
    <location>
        <begin position="515"/>
        <end position="535"/>
    </location>
</feature>
<feature type="transmembrane region" description="Helical" evidence="1">
    <location>
        <begin position="572"/>
        <end position="592"/>
    </location>
</feature>
<feature type="transmembrane region" description="Helical" evidence="1">
    <location>
        <begin position="606"/>
        <end position="626"/>
    </location>
</feature>
<feature type="transmembrane region" description="Helical" evidence="1">
    <location>
        <begin position="682"/>
        <end position="702"/>
    </location>
</feature>
<name>OPGH_PSEE4</name>
<keyword id="KW-0997">Cell inner membrane</keyword>
<keyword id="KW-1003">Cell membrane</keyword>
<keyword id="KW-0328">Glycosyltransferase</keyword>
<keyword id="KW-0472">Membrane</keyword>
<keyword id="KW-0808">Transferase</keyword>
<keyword id="KW-0812">Transmembrane</keyword>
<keyword id="KW-1133">Transmembrane helix</keyword>
<organism>
    <name type="scientific">Pseudomonas entomophila (strain L48)</name>
    <dbReference type="NCBI Taxonomy" id="384676"/>
    <lineage>
        <taxon>Bacteria</taxon>
        <taxon>Pseudomonadati</taxon>
        <taxon>Pseudomonadota</taxon>
        <taxon>Gammaproteobacteria</taxon>
        <taxon>Pseudomonadales</taxon>
        <taxon>Pseudomonadaceae</taxon>
        <taxon>Pseudomonas</taxon>
    </lineage>
</organism>
<comment type="function">
    <text evidence="1">Involved in the biosynthesis of osmoregulated periplasmic glucans (OPGs).</text>
</comment>
<comment type="pathway">
    <text evidence="1">Glycan metabolism; osmoregulated periplasmic glucan (OPG) biosynthesis.</text>
</comment>
<comment type="subcellular location">
    <subcellularLocation>
        <location evidence="1">Cell inner membrane</location>
        <topology evidence="1">Multi-pass membrane protein</topology>
    </subcellularLocation>
</comment>
<comment type="similarity">
    <text evidence="1">Belongs to the glycosyltransferase 2 family. OpgH subfamily.</text>
</comment>
<gene>
    <name evidence="1" type="primary">opgH</name>
    <name type="ordered locus">PSEEN5089</name>
</gene>